<sequence>MRPSNRTPAQTRPITITRQFTAHAEGSVLVEFGETKVLCTASFTEGVPRFLKGQGQGWVTAEYGMLPRSTHSRMDREAARGKQSGRTQEIQRLIGRALRACVDMKALGENTIVIDCDVIQADGGTRTASITGACVALVDALNWARGKGIIKSNPLKFLIAAVSVGIYKGEAISDLEYIEDSAAETDMNVVMTETGKIIEIQGTAEGEPFSHEELLELLALAKNSIREIVDVQKAALN</sequence>
<protein>
    <recommendedName>
        <fullName evidence="1">Ribonuclease PH</fullName>
        <shortName evidence="1">RNase PH</shortName>
        <ecNumber evidence="1">2.7.7.56</ecNumber>
    </recommendedName>
    <alternativeName>
        <fullName evidence="1">tRNA nucleotidyltransferase</fullName>
    </alternativeName>
</protein>
<gene>
    <name evidence="1" type="primary">rph</name>
    <name type="ordered locus">Sbal195_0381</name>
</gene>
<accession>A9KXZ7</accession>
<evidence type="ECO:0000255" key="1">
    <source>
        <dbReference type="HAMAP-Rule" id="MF_00564"/>
    </source>
</evidence>
<keyword id="KW-0548">Nucleotidyltransferase</keyword>
<keyword id="KW-0694">RNA-binding</keyword>
<keyword id="KW-0698">rRNA processing</keyword>
<keyword id="KW-0808">Transferase</keyword>
<keyword id="KW-0819">tRNA processing</keyword>
<keyword id="KW-0820">tRNA-binding</keyword>
<dbReference type="EC" id="2.7.7.56" evidence="1"/>
<dbReference type="EMBL" id="CP000891">
    <property type="protein sequence ID" value="ABX47562.1"/>
    <property type="molecule type" value="Genomic_DNA"/>
</dbReference>
<dbReference type="RefSeq" id="WP_006079862.1">
    <property type="nucleotide sequence ID" value="NC_009997.1"/>
</dbReference>
<dbReference type="SMR" id="A9KXZ7"/>
<dbReference type="GeneID" id="11770720"/>
<dbReference type="KEGG" id="sbn:Sbal195_0381"/>
<dbReference type="HOGENOM" id="CLU_050858_0_0_6"/>
<dbReference type="Proteomes" id="UP000000770">
    <property type="component" value="Chromosome"/>
</dbReference>
<dbReference type="GO" id="GO:0000175">
    <property type="term" value="F:3'-5'-RNA exonuclease activity"/>
    <property type="evidence" value="ECO:0007669"/>
    <property type="project" value="UniProtKB-UniRule"/>
</dbReference>
<dbReference type="GO" id="GO:0000049">
    <property type="term" value="F:tRNA binding"/>
    <property type="evidence" value="ECO:0007669"/>
    <property type="project" value="UniProtKB-UniRule"/>
</dbReference>
<dbReference type="GO" id="GO:0009022">
    <property type="term" value="F:tRNA nucleotidyltransferase activity"/>
    <property type="evidence" value="ECO:0007669"/>
    <property type="project" value="UniProtKB-UniRule"/>
</dbReference>
<dbReference type="GO" id="GO:0016075">
    <property type="term" value="P:rRNA catabolic process"/>
    <property type="evidence" value="ECO:0007669"/>
    <property type="project" value="UniProtKB-UniRule"/>
</dbReference>
<dbReference type="GO" id="GO:0006364">
    <property type="term" value="P:rRNA processing"/>
    <property type="evidence" value="ECO:0007669"/>
    <property type="project" value="UniProtKB-KW"/>
</dbReference>
<dbReference type="GO" id="GO:0008033">
    <property type="term" value="P:tRNA processing"/>
    <property type="evidence" value="ECO:0007669"/>
    <property type="project" value="UniProtKB-UniRule"/>
</dbReference>
<dbReference type="CDD" id="cd11362">
    <property type="entry name" value="RNase_PH_bact"/>
    <property type="match status" value="1"/>
</dbReference>
<dbReference type="FunFam" id="3.30.230.70:FF:000003">
    <property type="entry name" value="Ribonuclease PH"/>
    <property type="match status" value="1"/>
</dbReference>
<dbReference type="Gene3D" id="3.30.230.70">
    <property type="entry name" value="GHMP Kinase, N-terminal domain"/>
    <property type="match status" value="1"/>
</dbReference>
<dbReference type="HAMAP" id="MF_00564">
    <property type="entry name" value="RNase_PH"/>
    <property type="match status" value="1"/>
</dbReference>
<dbReference type="InterPro" id="IPR001247">
    <property type="entry name" value="ExoRNase_PH_dom1"/>
</dbReference>
<dbReference type="InterPro" id="IPR015847">
    <property type="entry name" value="ExoRNase_PH_dom2"/>
</dbReference>
<dbReference type="InterPro" id="IPR036345">
    <property type="entry name" value="ExoRNase_PH_dom2_sf"/>
</dbReference>
<dbReference type="InterPro" id="IPR027408">
    <property type="entry name" value="PNPase/RNase_PH_dom_sf"/>
</dbReference>
<dbReference type="InterPro" id="IPR020568">
    <property type="entry name" value="Ribosomal_Su5_D2-typ_SF"/>
</dbReference>
<dbReference type="InterPro" id="IPR050080">
    <property type="entry name" value="RNase_PH"/>
</dbReference>
<dbReference type="InterPro" id="IPR002381">
    <property type="entry name" value="RNase_PH_bac-type"/>
</dbReference>
<dbReference type="InterPro" id="IPR018336">
    <property type="entry name" value="RNase_PH_CS"/>
</dbReference>
<dbReference type="NCBIfam" id="TIGR01966">
    <property type="entry name" value="RNasePH"/>
    <property type="match status" value="1"/>
</dbReference>
<dbReference type="PANTHER" id="PTHR11953">
    <property type="entry name" value="EXOSOME COMPLEX COMPONENT"/>
    <property type="match status" value="1"/>
</dbReference>
<dbReference type="PANTHER" id="PTHR11953:SF0">
    <property type="entry name" value="EXOSOME COMPLEX COMPONENT RRP41"/>
    <property type="match status" value="1"/>
</dbReference>
<dbReference type="Pfam" id="PF01138">
    <property type="entry name" value="RNase_PH"/>
    <property type="match status" value="1"/>
</dbReference>
<dbReference type="Pfam" id="PF03725">
    <property type="entry name" value="RNase_PH_C"/>
    <property type="match status" value="1"/>
</dbReference>
<dbReference type="SUPFAM" id="SSF55666">
    <property type="entry name" value="Ribonuclease PH domain 2-like"/>
    <property type="match status" value="1"/>
</dbReference>
<dbReference type="SUPFAM" id="SSF54211">
    <property type="entry name" value="Ribosomal protein S5 domain 2-like"/>
    <property type="match status" value="1"/>
</dbReference>
<dbReference type="PROSITE" id="PS01277">
    <property type="entry name" value="RIBONUCLEASE_PH"/>
    <property type="match status" value="1"/>
</dbReference>
<feature type="chain" id="PRO_1000082303" description="Ribonuclease PH">
    <location>
        <begin position="1"/>
        <end position="237"/>
    </location>
</feature>
<feature type="binding site" evidence="1">
    <location>
        <position position="86"/>
    </location>
    <ligand>
        <name>phosphate</name>
        <dbReference type="ChEBI" id="CHEBI:43474"/>
        <note>substrate</note>
    </ligand>
</feature>
<feature type="binding site" evidence="1">
    <location>
        <begin position="124"/>
        <end position="126"/>
    </location>
    <ligand>
        <name>phosphate</name>
        <dbReference type="ChEBI" id="CHEBI:43474"/>
        <note>substrate</note>
    </ligand>
</feature>
<name>RNPH_SHEB9</name>
<organism>
    <name type="scientific">Shewanella baltica (strain OS195)</name>
    <dbReference type="NCBI Taxonomy" id="399599"/>
    <lineage>
        <taxon>Bacteria</taxon>
        <taxon>Pseudomonadati</taxon>
        <taxon>Pseudomonadota</taxon>
        <taxon>Gammaproteobacteria</taxon>
        <taxon>Alteromonadales</taxon>
        <taxon>Shewanellaceae</taxon>
        <taxon>Shewanella</taxon>
    </lineage>
</organism>
<comment type="function">
    <text evidence="1">Phosphorolytic 3'-5' exoribonuclease that plays an important role in tRNA 3'-end maturation. Removes nucleotide residues following the 3'-CCA terminus of tRNAs; can also add nucleotides to the ends of RNA molecules by using nucleoside diphosphates as substrates, but this may not be physiologically important. Probably plays a role in initiation of 16S rRNA degradation (leading to ribosome degradation) during starvation.</text>
</comment>
<comment type="catalytic activity">
    <reaction evidence="1">
        <text>tRNA(n+1) + phosphate = tRNA(n) + a ribonucleoside 5'-diphosphate</text>
        <dbReference type="Rhea" id="RHEA:10628"/>
        <dbReference type="Rhea" id="RHEA-COMP:17343"/>
        <dbReference type="Rhea" id="RHEA-COMP:17344"/>
        <dbReference type="ChEBI" id="CHEBI:43474"/>
        <dbReference type="ChEBI" id="CHEBI:57930"/>
        <dbReference type="ChEBI" id="CHEBI:173114"/>
        <dbReference type="EC" id="2.7.7.56"/>
    </reaction>
</comment>
<comment type="subunit">
    <text evidence="1">Homohexameric ring arranged as a trimer of dimers.</text>
</comment>
<comment type="similarity">
    <text evidence="1">Belongs to the RNase PH family.</text>
</comment>
<reference key="1">
    <citation type="submission" date="2007-11" db="EMBL/GenBank/DDBJ databases">
        <title>Complete sequence of chromosome of Shewanella baltica OS195.</title>
        <authorList>
            <consortium name="US DOE Joint Genome Institute"/>
            <person name="Copeland A."/>
            <person name="Lucas S."/>
            <person name="Lapidus A."/>
            <person name="Barry K."/>
            <person name="Glavina del Rio T."/>
            <person name="Dalin E."/>
            <person name="Tice H."/>
            <person name="Pitluck S."/>
            <person name="Chain P."/>
            <person name="Malfatti S."/>
            <person name="Shin M."/>
            <person name="Vergez L."/>
            <person name="Schmutz J."/>
            <person name="Larimer F."/>
            <person name="Land M."/>
            <person name="Hauser L."/>
            <person name="Kyrpides N."/>
            <person name="Kim E."/>
            <person name="Brettar I."/>
            <person name="Rodrigues J."/>
            <person name="Konstantinidis K."/>
            <person name="Klappenbach J."/>
            <person name="Hofle M."/>
            <person name="Tiedje J."/>
            <person name="Richardson P."/>
        </authorList>
    </citation>
    <scope>NUCLEOTIDE SEQUENCE [LARGE SCALE GENOMIC DNA]</scope>
    <source>
        <strain>OS195</strain>
    </source>
</reference>
<proteinExistence type="inferred from homology"/>